<evidence type="ECO:0000255" key="1">
    <source>
        <dbReference type="HAMAP-Rule" id="MF_01445"/>
    </source>
</evidence>
<name>TSAD_THIDA</name>
<organism>
    <name type="scientific">Thiobacillus denitrificans (strain ATCC 25259 / T1)</name>
    <dbReference type="NCBI Taxonomy" id="292415"/>
    <lineage>
        <taxon>Bacteria</taxon>
        <taxon>Pseudomonadati</taxon>
        <taxon>Pseudomonadota</taxon>
        <taxon>Betaproteobacteria</taxon>
        <taxon>Nitrosomonadales</taxon>
        <taxon>Thiobacillaceae</taxon>
        <taxon>Thiobacillus</taxon>
    </lineage>
</organism>
<proteinExistence type="inferred from homology"/>
<reference key="1">
    <citation type="journal article" date="2006" name="J. Bacteriol.">
        <title>The genome sequence of the obligately chemolithoautotrophic, facultatively anaerobic bacterium Thiobacillus denitrificans.</title>
        <authorList>
            <person name="Beller H.R."/>
            <person name="Chain P.S."/>
            <person name="Letain T.E."/>
            <person name="Chakicherla A."/>
            <person name="Larimer F.W."/>
            <person name="Richardson P.M."/>
            <person name="Coleman M.A."/>
            <person name="Wood A.P."/>
            <person name="Kelly D.P."/>
        </authorList>
    </citation>
    <scope>NUCLEOTIDE SEQUENCE [LARGE SCALE GENOMIC DNA]</scope>
    <source>
        <strain>ATCC 25259 / T1</strain>
    </source>
</reference>
<keyword id="KW-0012">Acyltransferase</keyword>
<keyword id="KW-0963">Cytoplasm</keyword>
<keyword id="KW-0408">Iron</keyword>
<keyword id="KW-0479">Metal-binding</keyword>
<keyword id="KW-1185">Reference proteome</keyword>
<keyword id="KW-0808">Transferase</keyword>
<keyword id="KW-0819">tRNA processing</keyword>
<comment type="function">
    <text evidence="1">Required for the formation of a threonylcarbamoyl group on adenosine at position 37 (t(6)A37) in tRNAs that read codons beginning with adenine. Is involved in the transfer of the threonylcarbamoyl moiety of threonylcarbamoyl-AMP (TC-AMP) to the N6 group of A37, together with TsaE and TsaB. TsaD likely plays a direct catalytic role in this reaction.</text>
</comment>
<comment type="catalytic activity">
    <reaction evidence="1">
        <text>L-threonylcarbamoyladenylate + adenosine(37) in tRNA = N(6)-L-threonylcarbamoyladenosine(37) in tRNA + AMP + H(+)</text>
        <dbReference type="Rhea" id="RHEA:37059"/>
        <dbReference type="Rhea" id="RHEA-COMP:10162"/>
        <dbReference type="Rhea" id="RHEA-COMP:10163"/>
        <dbReference type="ChEBI" id="CHEBI:15378"/>
        <dbReference type="ChEBI" id="CHEBI:73682"/>
        <dbReference type="ChEBI" id="CHEBI:74411"/>
        <dbReference type="ChEBI" id="CHEBI:74418"/>
        <dbReference type="ChEBI" id="CHEBI:456215"/>
        <dbReference type="EC" id="2.3.1.234"/>
    </reaction>
</comment>
<comment type="cofactor">
    <cofactor evidence="1">
        <name>Fe(2+)</name>
        <dbReference type="ChEBI" id="CHEBI:29033"/>
    </cofactor>
    <text evidence="1">Binds 1 Fe(2+) ion per subunit.</text>
</comment>
<comment type="subcellular location">
    <subcellularLocation>
        <location evidence="1">Cytoplasm</location>
    </subcellularLocation>
</comment>
<comment type="similarity">
    <text evidence="1">Belongs to the KAE1 / TsaD family.</text>
</comment>
<feature type="chain" id="PRO_0000303598" description="tRNA N6-adenosine threonylcarbamoyltransferase">
    <location>
        <begin position="1"/>
        <end position="341"/>
    </location>
</feature>
<feature type="binding site" evidence="1">
    <location>
        <position position="111"/>
    </location>
    <ligand>
        <name>Fe cation</name>
        <dbReference type="ChEBI" id="CHEBI:24875"/>
    </ligand>
</feature>
<feature type="binding site" evidence="1">
    <location>
        <position position="115"/>
    </location>
    <ligand>
        <name>Fe cation</name>
        <dbReference type="ChEBI" id="CHEBI:24875"/>
    </ligand>
</feature>
<feature type="binding site" evidence="1">
    <location>
        <begin position="134"/>
        <end position="138"/>
    </location>
    <ligand>
        <name>substrate</name>
    </ligand>
</feature>
<feature type="binding site" evidence="1">
    <location>
        <position position="167"/>
    </location>
    <ligand>
        <name>substrate</name>
    </ligand>
</feature>
<feature type="binding site" evidence="1">
    <location>
        <position position="180"/>
    </location>
    <ligand>
        <name>substrate</name>
    </ligand>
</feature>
<feature type="binding site" evidence="1">
    <location>
        <position position="270"/>
    </location>
    <ligand>
        <name>substrate</name>
    </ligand>
</feature>
<feature type="binding site" evidence="1">
    <location>
        <position position="298"/>
    </location>
    <ligand>
        <name>Fe cation</name>
        <dbReference type="ChEBI" id="CHEBI:24875"/>
    </ligand>
</feature>
<accession>Q3SGB3</accession>
<dbReference type="EC" id="2.3.1.234" evidence="1"/>
<dbReference type="EMBL" id="CP000116">
    <property type="protein sequence ID" value="AAZ98337.1"/>
    <property type="molecule type" value="Genomic_DNA"/>
</dbReference>
<dbReference type="RefSeq" id="WP_011312896.1">
    <property type="nucleotide sequence ID" value="NC_007404.1"/>
</dbReference>
<dbReference type="SMR" id="Q3SGB3"/>
<dbReference type="STRING" id="292415.Tbd_2384"/>
<dbReference type="KEGG" id="tbd:Tbd_2384"/>
<dbReference type="eggNOG" id="COG0533">
    <property type="taxonomic scope" value="Bacteria"/>
</dbReference>
<dbReference type="HOGENOM" id="CLU_023208_0_2_4"/>
<dbReference type="OrthoDB" id="9806197at2"/>
<dbReference type="Proteomes" id="UP000008291">
    <property type="component" value="Chromosome"/>
</dbReference>
<dbReference type="GO" id="GO:0005737">
    <property type="term" value="C:cytoplasm"/>
    <property type="evidence" value="ECO:0007669"/>
    <property type="project" value="UniProtKB-SubCell"/>
</dbReference>
<dbReference type="GO" id="GO:0005506">
    <property type="term" value="F:iron ion binding"/>
    <property type="evidence" value="ECO:0007669"/>
    <property type="project" value="UniProtKB-UniRule"/>
</dbReference>
<dbReference type="GO" id="GO:0061711">
    <property type="term" value="F:N(6)-L-threonylcarbamoyladenine synthase activity"/>
    <property type="evidence" value="ECO:0007669"/>
    <property type="project" value="UniProtKB-EC"/>
</dbReference>
<dbReference type="GO" id="GO:0002949">
    <property type="term" value="P:tRNA threonylcarbamoyladenosine modification"/>
    <property type="evidence" value="ECO:0007669"/>
    <property type="project" value="UniProtKB-UniRule"/>
</dbReference>
<dbReference type="CDD" id="cd24133">
    <property type="entry name" value="ASKHA_NBD_TsaD_bac"/>
    <property type="match status" value="1"/>
</dbReference>
<dbReference type="FunFam" id="3.30.420.40:FF:000012">
    <property type="entry name" value="tRNA N6-adenosine threonylcarbamoyltransferase"/>
    <property type="match status" value="1"/>
</dbReference>
<dbReference type="FunFam" id="3.30.420.40:FF:000040">
    <property type="entry name" value="tRNA N6-adenosine threonylcarbamoyltransferase"/>
    <property type="match status" value="1"/>
</dbReference>
<dbReference type="Gene3D" id="3.30.420.40">
    <property type="match status" value="2"/>
</dbReference>
<dbReference type="HAMAP" id="MF_01445">
    <property type="entry name" value="TsaD"/>
    <property type="match status" value="1"/>
</dbReference>
<dbReference type="InterPro" id="IPR043129">
    <property type="entry name" value="ATPase_NBD"/>
</dbReference>
<dbReference type="InterPro" id="IPR000905">
    <property type="entry name" value="Gcp-like_dom"/>
</dbReference>
<dbReference type="InterPro" id="IPR017861">
    <property type="entry name" value="KAE1/TsaD"/>
</dbReference>
<dbReference type="InterPro" id="IPR017860">
    <property type="entry name" value="Peptidase_M22_CS"/>
</dbReference>
<dbReference type="InterPro" id="IPR022450">
    <property type="entry name" value="TsaD"/>
</dbReference>
<dbReference type="NCBIfam" id="TIGR00329">
    <property type="entry name" value="gcp_kae1"/>
    <property type="match status" value="1"/>
</dbReference>
<dbReference type="NCBIfam" id="TIGR03723">
    <property type="entry name" value="T6A_TsaD_YgjD"/>
    <property type="match status" value="1"/>
</dbReference>
<dbReference type="PANTHER" id="PTHR11735">
    <property type="entry name" value="TRNA N6-ADENOSINE THREONYLCARBAMOYLTRANSFERASE"/>
    <property type="match status" value="1"/>
</dbReference>
<dbReference type="PANTHER" id="PTHR11735:SF6">
    <property type="entry name" value="TRNA N6-ADENOSINE THREONYLCARBAMOYLTRANSFERASE, MITOCHONDRIAL"/>
    <property type="match status" value="1"/>
</dbReference>
<dbReference type="Pfam" id="PF00814">
    <property type="entry name" value="TsaD"/>
    <property type="match status" value="1"/>
</dbReference>
<dbReference type="PRINTS" id="PR00789">
    <property type="entry name" value="OSIALOPTASE"/>
</dbReference>
<dbReference type="SUPFAM" id="SSF53067">
    <property type="entry name" value="Actin-like ATPase domain"/>
    <property type="match status" value="2"/>
</dbReference>
<dbReference type="PROSITE" id="PS01016">
    <property type="entry name" value="GLYCOPROTEASE"/>
    <property type="match status" value="1"/>
</dbReference>
<sequence length="341" mass="35098">MLVLGIESSCDETGVALYDSAEGLVAHALHSQIAMHNAYGGVVPELASRDHIRRILPLTRQVFEESGRLLSELGGVAFTQGPGLAGALLVGAGMGRALAFALRVPAIGVHHLEGHLLSPLISDTPPAFPFVALLVSGGHTQLMLVSAVGQYTLLGETLDDAAGEAFDKTAQLLGLGYPGGPALSRLAAAGDATRFALPRPMLNSGDFDFSFSGLKTAVLTLVRKQGLGQAADIAAAFEAAAVDVLVGKSLAACRHAAANRLVVAGGVGANARLRERLTAEGGRAGVSVFYPSLEFCTDNGAMIAFAGAQRLASVADRVARASDLDFAVKPRWALASLGPVE</sequence>
<gene>
    <name evidence="1" type="primary">tsaD</name>
    <name type="synonym">gcp</name>
    <name type="ordered locus">Tbd_2384</name>
</gene>
<protein>
    <recommendedName>
        <fullName evidence="1">tRNA N6-adenosine threonylcarbamoyltransferase</fullName>
        <ecNumber evidence="1">2.3.1.234</ecNumber>
    </recommendedName>
    <alternativeName>
        <fullName evidence="1">N6-L-threonylcarbamoyladenine synthase</fullName>
        <shortName evidence="1">t(6)A synthase</shortName>
    </alternativeName>
    <alternativeName>
        <fullName evidence="1">t(6)A37 threonylcarbamoyladenosine biosynthesis protein TsaD</fullName>
    </alternativeName>
    <alternativeName>
        <fullName evidence="1">tRNA threonylcarbamoyladenosine biosynthesis protein TsaD</fullName>
    </alternativeName>
</protein>